<accession>Q1QR19</accession>
<keyword id="KW-0997">Cell inner membrane</keyword>
<keyword id="KW-1003">Cell membrane</keyword>
<keyword id="KW-0342">GTP-binding</keyword>
<keyword id="KW-0378">Hydrolase</keyword>
<keyword id="KW-0472">Membrane</keyword>
<keyword id="KW-0547">Nucleotide-binding</keyword>
<keyword id="KW-0648">Protein biosynthesis</keyword>
<keyword id="KW-1185">Reference proteome</keyword>
<gene>
    <name evidence="1" type="primary">lepA</name>
    <name type="ordered locus">Nham_0438</name>
</gene>
<proteinExistence type="inferred from homology"/>
<organism>
    <name type="scientific">Nitrobacter hamburgensis (strain DSM 10229 / NCIMB 13809 / X14)</name>
    <dbReference type="NCBI Taxonomy" id="323097"/>
    <lineage>
        <taxon>Bacteria</taxon>
        <taxon>Pseudomonadati</taxon>
        <taxon>Pseudomonadota</taxon>
        <taxon>Alphaproteobacteria</taxon>
        <taxon>Hyphomicrobiales</taxon>
        <taxon>Nitrobacteraceae</taxon>
        <taxon>Nitrobacter</taxon>
    </lineage>
</organism>
<sequence length="610" mass="67679">MSDELRKRGTTPIANIRNFSIVAHIDHGKSTLADRLIQMTGGLSDREMAGKEQVLDSMDIERERGITIKAQTVRLNYHAKDGKDYIFNLMDTPGHVDFAYEVSRSLAACEGSLLVVDASQGVEAQTLANVYQALDNNHEIVPVLNKVDLPAAEPDKVKQQIEDVIGIDASDAVMISAKTGLGVPDVLEAIVTRLPPPQGDRDATLKALLVDSWYDVYLGVVVLVRIVDGVMKKNSRIRMMGTNAAYDVERVGFFTPKMQQVDELGPGEIGFITAAIKEVADTRVGDTITDDRKPITEMLPGFKPAIPVVFCGLFPVDADDFETLRTAMGKLRLNDASFSFEMETSAALGFGFRCGFLGLLHLEIIQERLSREFDLNLIATAPSVIYKMKLTDGGEIEIHNPIDMPDVVKIAEIAEPWIEATILTPDDYLGSVLKLCQERRGSQKELTYVGSRAMVRYDLPLNEVVFDFYDRLKSVSKGYASFDYHLTDYKVADLVKMQILVNGEPVDALSMLVHRTRAEGRGRAMVEKMKELIPPHMFQIPIQAAIGGKVIARETVRALRKDVTAKCYGGDITRKRKLLEKQKEGKKKMRQFGKVDIPQEAFIAALKVDG</sequence>
<comment type="function">
    <text evidence="1">Required for accurate and efficient protein synthesis under certain stress conditions. May act as a fidelity factor of the translation reaction, by catalyzing a one-codon backward translocation of tRNAs on improperly translocated ribosomes. Back-translocation proceeds from a post-translocation (POST) complex to a pre-translocation (PRE) complex, thus giving elongation factor G a second chance to translocate the tRNAs correctly. Binds to ribosomes in a GTP-dependent manner.</text>
</comment>
<comment type="catalytic activity">
    <reaction evidence="1">
        <text>GTP + H2O = GDP + phosphate + H(+)</text>
        <dbReference type="Rhea" id="RHEA:19669"/>
        <dbReference type="ChEBI" id="CHEBI:15377"/>
        <dbReference type="ChEBI" id="CHEBI:15378"/>
        <dbReference type="ChEBI" id="CHEBI:37565"/>
        <dbReference type="ChEBI" id="CHEBI:43474"/>
        <dbReference type="ChEBI" id="CHEBI:58189"/>
        <dbReference type="EC" id="3.6.5.n1"/>
    </reaction>
</comment>
<comment type="subcellular location">
    <subcellularLocation>
        <location evidence="1">Cell inner membrane</location>
        <topology evidence="1">Peripheral membrane protein</topology>
        <orientation evidence="1">Cytoplasmic side</orientation>
    </subcellularLocation>
</comment>
<comment type="similarity">
    <text evidence="1">Belongs to the TRAFAC class translation factor GTPase superfamily. Classic translation factor GTPase family. LepA subfamily.</text>
</comment>
<evidence type="ECO:0000255" key="1">
    <source>
        <dbReference type="HAMAP-Rule" id="MF_00071"/>
    </source>
</evidence>
<dbReference type="EC" id="3.6.5.n1" evidence="1"/>
<dbReference type="EMBL" id="CP000319">
    <property type="protein sequence ID" value="ABE61328.1"/>
    <property type="molecule type" value="Genomic_DNA"/>
</dbReference>
<dbReference type="RefSeq" id="WP_011509032.1">
    <property type="nucleotide sequence ID" value="NC_007964.1"/>
</dbReference>
<dbReference type="SMR" id="Q1QR19"/>
<dbReference type="STRING" id="323097.Nham_0438"/>
<dbReference type="KEGG" id="nha:Nham_0438"/>
<dbReference type="eggNOG" id="COG0481">
    <property type="taxonomic scope" value="Bacteria"/>
</dbReference>
<dbReference type="HOGENOM" id="CLU_009995_3_3_5"/>
<dbReference type="OrthoDB" id="9802948at2"/>
<dbReference type="Proteomes" id="UP000001953">
    <property type="component" value="Chromosome"/>
</dbReference>
<dbReference type="GO" id="GO:0005886">
    <property type="term" value="C:plasma membrane"/>
    <property type="evidence" value="ECO:0007669"/>
    <property type="project" value="UniProtKB-SubCell"/>
</dbReference>
<dbReference type="GO" id="GO:0005525">
    <property type="term" value="F:GTP binding"/>
    <property type="evidence" value="ECO:0007669"/>
    <property type="project" value="UniProtKB-UniRule"/>
</dbReference>
<dbReference type="GO" id="GO:0003924">
    <property type="term" value="F:GTPase activity"/>
    <property type="evidence" value="ECO:0007669"/>
    <property type="project" value="UniProtKB-UniRule"/>
</dbReference>
<dbReference type="GO" id="GO:0097216">
    <property type="term" value="F:guanosine tetraphosphate binding"/>
    <property type="evidence" value="ECO:0007669"/>
    <property type="project" value="UniProtKB-ARBA"/>
</dbReference>
<dbReference type="GO" id="GO:0043022">
    <property type="term" value="F:ribosome binding"/>
    <property type="evidence" value="ECO:0007669"/>
    <property type="project" value="UniProtKB-UniRule"/>
</dbReference>
<dbReference type="GO" id="GO:0003746">
    <property type="term" value="F:translation elongation factor activity"/>
    <property type="evidence" value="ECO:0007669"/>
    <property type="project" value="UniProtKB-UniRule"/>
</dbReference>
<dbReference type="GO" id="GO:0045727">
    <property type="term" value="P:positive regulation of translation"/>
    <property type="evidence" value="ECO:0007669"/>
    <property type="project" value="UniProtKB-UniRule"/>
</dbReference>
<dbReference type="CDD" id="cd03699">
    <property type="entry name" value="EF4_II"/>
    <property type="match status" value="1"/>
</dbReference>
<dbReference type="CDD" id="cd16260">
    <property type="entry name" value="EF4_III"/>
    <property type="match status" value="1"/>
</dbReference>
<dbReference type="CDD" id="cd01890">
    <property type="entry name" value="LepA"/>
    <property type="match status" value="1"/>
</dbReference>
<dbReference type="CDD" id="cd03709">
    <property type="entry name" value="lepA_C"/>
    <property type="match status" value="1"/>
</dbReference>
<dbReference type="FunFam" id="3.40.50.300:FF:000078">
    <property type="entry name" value="Elongation factor 4"/>
    <property type="match status" value="1"/>
</dbReference>
<dbReference type="FunFam" id="2.40.30.10:FF:000015">
    <property type="entry name" value="Translation factor GUF1, mitochondrial"/>
    <property type="match status" value="1"/>
</dbReference>
<dbReference type="FunFam" id="3.30.70.240:FF:000007">
    <property type="entry name" value="Translation factor GUF1, mitochondrial"/>
    <property type="match status" value="1"/>
</dbReference>
<dbReference type="FunFam" id="3.30.70.2570:FF:000001">
    <property type="entry name" value="Translation factor GUF1, mitochondrial"/>
    <property type="match status" value="1"/>
</dbReference>
<dbReference type="FunFam" id="3.30.70.870:FF:000004">
    <property type="entry name" value="Translation factor GUF1, mitochondrial"/>
    <property type="match status" value="1"/>
</dbReference>
<dbReference type="Gene3D" id="3.30.70.240">
    <property type="match status" value="1"/>
</dbReference>
<dbReference type="Gene3D" id="3.30.70.2570">
    <property type="entry name" value="Elongation factor 4, C-terminal domain"/>
    <property type="match status" value="1"/>
</dbReference>
<dbReference type="Gene3D" id="3.30.70.870">
    <property type="entry name" value="Elongation Factor G (Translational Gtpase), domain 3"/>
    <property type="match status" value="1"/>
</dbReference>
<dbReference type="Gene3D" id="3.40.50.300">
    <property type="entry name" value="P-loop containing nucleotide triphosphate hydrolases"/>
    <property type="match status" value="1"/>
</dbReference>
<dbReference type="Gene3D" id="2.40.30.10">
    <property type="entry name" value="Translation factors"/>
    <property type="match status" value="1"/>
</dbReference>
<dbReference type="HAMAP" id="MF_00071">
    <property type="entry name" value="LepA"/>
    <property type="match status" value="1"/>
</dbReference>
<dbReference type="InterPro" id="IPR006297">
    <property type="entry name" value="EF-4"/>
</dbReference>
<dbReference type="InterPro" id="IPR035647">
    <property type="entry name" value="EFG_III/V"/>
</dbReference>
<dbReference type="InterPro" id="IPR000640">
    <property type="entry name" value="EFG_V-like"/>
</dbReference>
<dbReference type="InterPro" id="IPR004161">
    <property type="entry name" value="EFTu-like_2"/>
</dbReference>
<dbReference type="InterPro" id="IPR031157">
    <property type="entry name" value="G_TR_CS"/>
</dbReference>
<dbReference type="InterPro" id="IPR038363">
    <property type="entry name" value="LepA_C_sf"/>
</dbReference>
<dbReference type="InterPro" id="IPR013842">
    <property type="entry name" value="LepA_CTD"/>
</dbReference>
<dbReference type="InterPro" id="IPR035654">
    <property type="entry name" value="LepA_IV"/>
</dbReference>
<dbReference type="InterPro" id="IPR027417">
    <property type="entry name" value="P-loop_NTPase"/>
</dbReference>
<dbReference type="InterPro" id="IPR005225">
    <property type="entry name" value="Small_GTP-bd"/>
</dbReference>
<dbReference type="InterPro" id="IPR000795">
    <property type="entry name" value="T_Tr_GTP-bd_dom"/>
</dbReference>
<dbReference type="NCBIfam" id="TIGR01393">
    <property type="entry name" value="lepA"/>
    <property type="match status" value="1"/>
</dbReference>
<dbReference type="NCBIfam" id="TIGR00231">
    <property type="entry name" value="small_GTP"/>
    <property type="match status" value="1"/>
</dbReference>
<dbReference type="PANTHER" id="PTHR43512:SF4">
    <property type="entry name" value="TRANSLATION FACTOR GUF1 HOMOLOG, CHLOROPLASTIC"/>
    <property type="match status" value="1"/>
</dbReference>
<dbReference type="PANTHER" id="PTHR43512">
    <property type="entry name" value="TRANSLATION FACTOR GUF1-RELATED"/>
    <property type="match status" value="1"/>
</dbReference>
<dbReference type="Pfam" id="PF00679">
    <property type="entry name" value="EFG_C"/>
    <property type="match status" value="1"/>
</dbReference>
<dbReference type="Pfam" id="PF00009">
    <property type="entry name" value="GTP_EFTU"/>
    <property type="match status" value="1"/>
</dbReference>
<dbReference type="Pfam" id="PF03144">
    <property type="entry name" value="GTP_EFTU_D2"/>
    <property type="match status" value="1"/>
</dbReference>
<dbReference type="Pfam" id="PF06421">
    <property type="entry name" value="LepA_C"/>
    <property type="match status" value="1"/>
</dbReference>
<dbReference type="PRINTS" id="PR00315">
    <property type="entry name" value="ELONGATNFCT"/>
</dbReference>
<dbReference type="SMART" id="SM00838">
    <property type="entry name" value="EFG_C"/>
    <property type="match status" value="1"/>
</dbReference>
<dbReference type="SUPFAM" id="SSF54980">
    <property type="entry name" value="EF-G C-terminal domain-like"/>
    <property type="match status" value="2"/>
</dbReference>
<dbReference type="SUPFAM" id="SSF52540">
    <property type="entry name" value="P-loop containing nucleoside triphosphate hydrolases"/>
    <property type="match status" value="1"/>
</dbReference>
<dbReference type="PROSITE" id="PS00301">
    <property type="entry name" value="G_TR_1"/>
    <property type="match status" value="1"/>
</dbReference>
<dbReference type="PROSITE" id="PS51722">
    <property type="entry name" value="G_TR_2"/>
    <property type="match status" value="1"/>
</dbReference>
<reference key="1">
    <citation type="submission" date="2006-03" db="EMBL/GenBank/DDBJ databases">
        <title>Complete sequence of chromosome of Nitrobacter hamburgensis X14.</title>
        <authorList>
            <consortium name="US DOE Joint Genome Institute"/>
            <person name="Copeland A."/>
            <person name="Lucas S."/>
            <person name="Lapidus A."/>
            <person name="Barry K."/>
            <person name="Detter J.C."/>
            <person name="Glavina del Rio T."/>
            <person name="Hammon N."/>
            <person name="Israni S."/>
            <person name="Dalin E."/>
            <person name="Tice H."/>
            <person name="Pitluck S."/>
            <person name="Chain P."/>
            <person name="Malfatti S."/>
            <person name="Shin M."/>
            <person name="Vergez L."/>
            <person name="Schmutz J."/>
            <person name="Larimer F."/>
            <person name="Land M."/>
            <person name="Hauser L."/>
            <person name="Kyrpides N."/>
            <person name="Ivanova N."/>
            <person name="Ward B."/>
            <person name="Arp D."/>
            <person name="Klotz M."/>
            <person name="Stein L."/>
            <person name="O'Mullan G."/>
            <person name="Starkenburg S."/>
            <person name="Sayavedra L."/>
            <person name="Poret-Peterson A.T."/>
            <person name="Gentry M.E."/>
            <person name="Bruce D."/>
            <person name="Richardson P."/>
        </authorList>
    </citation>
    <scope>NUCLEOTIDE SEQUENCE [LARGE SCALE GENOMIC DNA]</scope>
    <source>
        <strain>DSM 10229 / NCIMB 13809 / X14</strain>
    </source>
</reference>
<protein>
    <recommendedName>
        <fullName evidence="1">Elongation factor 4</fullName>
        <shortName evidence="1">EF-4</shortName>
        <ecNumber evidence="1">3.6.5.n1</ecNumber>
    </recommendedName>
    <alternativeName>
        <fullName evidence="1">Ribosomal back-translocase LepA</fullName>
    </alternativeName>
</protein>
<feature type="chain" id="PRO_0000265680" description="Elongation factor 4">
    <location>
        <begin position="1"/>
        <end position="610"/>
    </location>
</feature>
<feature type="domain" description="tr-type G">
    <location>
        <begin position="14"/>
        <end position="198"/>
    </location>
</feature>
<feature type="binding site" evidence="1">
    <location>
        <begin position="26"/>
        <end position="31"/>
    </location>
    <ligand>
        <name>GTP</name>
        <dbReference type="ChEBI" id="CHEBI:37565"/>
    </ligand>
</feature>
<feature type="binding site" evidence="1">
    <location>
        <begin position="145"/>
        <end position="148"/>
    </location>
    <ligand>
        <name>GTP</name>
        <dbReference type="ChEBI" id="CHEBI:37565"/>
    </ligand>
</feature>
<name>LEPA_NITHX</name>